<dbReference type="EMBL" id="L77117">
    <property type="protein sequence ID" value="AAB99486.1"/>
    <property type="molecule type" value="Genomic_DNA"/>
</dbReference>
<dbReference type="PIR" id="F64483">
    <property type="entry name" value="F64483"/>
</dbReference>
<dbReference type="RefSeq" id="WP_010870992.1">
    <property type="nucleotide sequence ID" value="NC_000909.1"/>
</dbReference>
<dbReference type="FunCoup" id="Q58866">
    <property type="interactions" value="8"/>
</dbReference>
<dbReference type="STRING" id="243232.MJ_1471"/>
<dbReference type="PaxDb" id="243232-MJ_1471"/>
<dbReference type="EnsemblBacteria" id="AAB99486">
    <property type="protein sequence ID" value="AAB99486"/>
    <property type="gene ID" value="MJ_1471"/>
</dbReference>
<dbReference type="GeneID" id="1452376"/>
<dbReference type="KEGG" id="mja:MJ_1471"/>
<dbReference type="eggNOG" id="arCOG05085">
    <property type="taxonomic scope" value="Archaea"/>
</dbReference>
<dbReference type="HOGENOM" id="CLU_1514623_0_0_2"/>
<dbReference type="InParanoid" id="Q58866"/>
<dbReference type="OrthoDB" id="65554at2157"/>
<dbReference type="Proteomes" id="UP000000805">
    <property type="component" value="Chromosome"/>
</dbReference>
<dbReference type="GO" id="GO:0016020">
    <property type="term" value="C:membrane"/>
    <property type="evidence" value="ECO:0007669"/>
    <property type="project" value="UniProtKB-SubCell"/>
</dbReference>
<evidence type="ECO:0000255" key="1"/>
<evidence type="ECO:0000305" key="2"/>
<comment type="subcellular location">
    <subcellularLocation>
        <location evidence="2">Membrane</location>
        <topology evidence="2">Single-pass membrane protein</topology>
    </subcellularLocation>
</comment>
<accession>Q58866</accession>
<keyword id="KW-0472">Membrane</keyword>
<keyword id="KW-1185">Reference proteome</keyword>
<keyword id="KW-0812">Transmembrane</keyword>
<keyword id="KW-1133">Transmembrane helix</keyword>
<feature type="chain" id="PRO_0000107357" description="Uncharacterized protein MJ1471">
    <location>
        <begin position="1"/>
        <end position="178"/>
    </location>
</feature>
<feature type="transmembrane region" description="Helical" evidence="1">
    <location>
        <begin position="7"/>
        <end position="27"/>
    </location>
</feature>
<reference key="1">
    <citation type="journal article" date="1996" name="Science">
        <title>Complete genome sequence of the methanogenic archaeon, Methanococcus jannaschii.</title>
        <authorList>
            <person name="Bult C.J."/>
            <person name="White O."/>
            <person name="Olsen G.J."/>
            <person name="Zhou L."/>
            <person name="Fleischmann R.D."/>
            <person name="Sutton G.G."/>
            <person name="Blake J.A."/>
            <person name="FitzGerald L.M."/>
            <person name="Clayton R.A."/>
            <person name="Gocayne J.D."/>
            <person name="Kerlavage A.R."/>
            <person name="Dougherty B.A."/>
            <person name="Tomb J.-F."/>
            <person name="Adams M.D."/>
            <person name="Reich C.I."/>
            <person name="Overbeek R."/>
            <person name="Kirkness E.F."/>
            <person name="Weinstock K.G."/>
            <person name="Merrick J.M."/>
            <person name="Glodek A."/>
            <person name="Scott J.L."/>
            <person name="Geoghagen N.S.M."/>
            <person name="Weidman J.F."/>
            <person name="Fuhrmann J.L."/>
            <person name="Nguyen D."/>
            <person name="Utterback T.R."/>
            <person name="Kelley J.M."/>
            <person name="Peterson J.D."/>
            <person name="Sadow P.W."/>
            <person name="Hanna M.C."/>
            <person name="Cotton M.D."/>
            <person name="Roberts K.M."/>
            <person name="Hurst M.A."/>
            <person name="Kaine B.P."/>
            <person name="Borodovsky M."/>
            <person name="Klenk H.-P."/>
            <person name="Fraser C.M."/>
            <person name="Smith H.O."/>
            <person name="Woese C.R."/>
            <person name="Venter J.C."/>
        </authorList>
    </citation>
    <scope>NUCLEOTIDE SEQUENCE [LARGE SCALE GENOMIC DNA]</scope>
    <source>
        <strain>ATCC 43067 / DSM 2661 / JAL-1 / JCM 10045 / NBRC 100440</strain>
    </source>
</reference>
<protein>
    <recommendedName>
        <fullName>Uncharacterized protein MJ1471</fullName>
    </recommendedName>
</protein>
<name>Y1471_METJA</name>
<gene>
    <name type="ordered locus">MJ1471</name>
</gene>
<sequence length="178" mass="20692">MINSVDLAIGTAILLIGMAYWTVSIVEHNNNYVDIVKSDYIFDKGISTMEHLSEDGTLQDAVLLYYFDRVNDSKKLLEERIPLKHYLLYIDNNLLINKSNGVNNSNSVYILTVLTLNRSEGWYVIYGNEDFVNISKERFLDYDDAYNYLKYRNYDIHMPVYLSKNVSSSRVELYILGN</sequence>
<proteinExistence type="predicted"/>
<organism>
    <name type="scientific">Methanocaldococcus jannaschii (strain ATCC 43067 / DSM 2661 / JAL-1 / JCM 10045 / NBRC 100440)</name>
    <name type="common">Methanococcus jannaschii</name>
    <dbReference type="NCBI Taxonomy" id="243232"/>
    <lineage>
        <taxon>Archaea</taxon>
        <taxon>Methanobacteriati</taxon>
        <taxon>Methanobacteriota</taxon>
        <taxon>Methanomada group</taxon>
        <taxon>Methanococci</taxon>
        <taxon>Methanococcales</taxon>
        <taxon>Methanocaldococcaceae</taxon>
        <taxon>Methanocaldococcus</taxon>
    </lineage>
</organism>